<organism>
    <name type="scientific">Rippkaea orientalis (strain PCC 8801 / RF-1)</name>
    <name type="common">Cyanothece sp. (strain PCC 8801)</name>
    <dbReference type="NCBI Taxonomy" id="41431"/>
    <lineage>
        <taxon>Bacteria</taxon>
        <taxon>Bacillati</taxon>
        <taxon>Cyanobacteriota</taxon>
        <taxon>Cyanophyceae</taxon>
        <taxon>Oscillatoriophycideae</taxon>
        <taxon>Chroococcales</taxon>
        <taxon>Aphanothecaceae</taxon>
        <taxon>Rippkaea</taxon>
        <taxon>Rippkaea orientalis</taxon>
    </lineage>
</organism>
<reference key="1">
    <citation type="journal article" date="2011" name="MBio">
        <title>Novel metabolic attributes of the genus Cyanothece, comprising a group of unicellular nitrogen-fixing Cyanobacteria.</title>
        <authorList>
            <person name="Bandyopadhyay A."/>
            <person name="Elvitigala T."/>
            <person name="Welsh E."/>
            <person name="Stockel J."/>
            <person name="Liberton M."/>
            <person name="Min H."/>
            <person name="Sherman L.A."/>
            <person name="Pakrasi H.B."/>
        </authorList>
    </citation>
    <scope>NUCLEOTIDE SEQUENCE [LARGE SCALE GENOMIC DNA]</scope>
    <source>
        <strain>PCC 8801 / RF-1</strain>
    </source>
</reference>
<evidence type="ECO:0000255" key="1">
    <source>
        <dbReference type="HAMAP-Rule" id="MF_01342"/>
    </source>
</evidence>
<evidence type="ECO:0000305" key="2"/>
<comment type="function">
    <text evidence="1">Binds 23S rRNA and is also seen to make contacts with the A and possibly P site tRNAs.</text>
</comment>
<comment type="subunit">
    <text evidence="1">Part of the 50S ribosomal subunit.</text>
</comment>
<comment type="similarity">
    <text evidence="1">Belongs to the universal ribosomal protein uL16 family.</text>
</comment>
<protein>
    <recommendedName>
        <fullName evidence="1">Large ribosomal subunit protein uL16</fullName>
    </recommendedName>
    <alternativeName>
        <fullName evidence="2">50S ribosomal protein L16</fullName>
    </alternativeName>
</protein>
<keyword id="KW-1185">Reference proteome</keyword>
<keyword id="KW-0687">Ribonucleoprotein</keyword>
<keyword id="KW-0689">Ribosomal protein</keyword>
<keyword id="KW-0694">RNA-binding</keyword>
<keyword id="KW-0699">rRNA-binding</keyword>
<keyword id="KW-0820">tRNA-binding</keyword>
<feature type="chain" id="PRO_1000142957" description="Large ribosomal subunit protein uL16">
    <location>
        <begin position="1"/>
        <end position="139"/>
    </location>
</feature>
<proteinExistence type="inferred from homology"/>
<accession>B7K241</accession>
<gene>
    <name evidence="1" type="primary">rplP</name>
    <name evidence="1" type="synonym">rpl16</name>
    <name type="ordered locus">PCC8801_0245</name>
</gene>
<dbReference type="EMBL" id="CP001287">
    <property type="protein sequence ID" value="ACK64348.1"/>
    <property type="molecule type" value="Genomic_DNA"/>
</dbReference>
<dbReference type="RefSeq" id="WP_012593625.1">
    <property type="nucleotide sequence ID" value="NC_011726.1"/>
</dbReference>
<dbReference type="SMR" id="B7K241"/>
<dbReference type="STRING" id="41431.PCC8801_0245"/>
<dbReference type="KEGG" id="cyp:PCC8801_0245"/>
<dbReference type="eggNOG" id="COG0197">
    <property type="taxonomic scope" value="Bacteria"/>
</dbReference>
<dbReference type="HOGENOM" id="CLU_078858_2_1_3"/>
<dbReference type="OrthoDB" id="9802589at2"/>
<dbReference type="Proteomes" id="UP000008204">
    <property type="component" value="Chromosome"/>
</dbReference>
<dbReference type="GO" id="GO:0022625">
    <property type="term" value="C:cytosolic large ribosomal subunit"/>
    <property type="evidence" value="ECO:0007669"/>
    <property type="project" value="TreeGrafter"/>
</dbReference>
<dbReference type="GO" id="GO:0019843">
    <property type="term" value="F:rRNA binding"/>
    <property type="evidence" value="ECO:0007669"/>
    <property type="project" value="UniProtKB-UniRule"/>
</dbReference>
<dbReference type="GO" id="GO:0003735">
    <property type="term" value="F:structural constituent of ribosome"/>
    <property type="evidence" value="ECO:0007669"/>
    <property type="project" value="InterPro"/>
</dbReference>
<dbReference type="GO" id="GO:0000049">
    <property type="term" value="F:tRNA binding"/>
    <property type="evidence" value="ECO:0007669"/>
    <property type="project" value="UniProtKB-KW"/>
</dbReference>
<dbReference type="GO" id="GO:0006412">
    <property type="term" value="P:translation"/>
    <property type="evidence" value="ECO:0007669"/>
    <property type="project" value="UniProtKB-UniRule"/>
</dbReference>
<dbReference type="CDD" id="cd01433">
    <property type="entry name" value="Ribosomal_L16_L10e"/>
    <property type="match status" value="1"/>
</dbReference>
<dbReference type="FunFam" id="3.90.1170.10:FF:000001">
    <property type="entry name" value="50S ribosomal protein L16"/>
    <property type="match status" value="1"/>
</dbReference>
<dbReference type="Gene3D" id="3.90.1170.10">
    <property type="entry name" value="Ribosomal protein L10e/L16"/>
    <property type="match status" value="1"/>
</dbReference>
<dbReference type="HAMAP" id="MF_01342">
    <property type="entry name" value="Ribosomal_uL16"/>
    <property type="match status" value="1"/>
</dbReference>
<dbReference type="InterPro" id="IPR047873">
    <property type="entry name" value="Ribosomal_uL16"/>
</dbReference>
<dbReference type="InterPro" id="IPR000114">
    <property type="entry name" value="Ribosomal_uL16_bact-type"/>
</dbReference>
<dbReference type="InterPro" id="IPR020798">
    <property type="entry name" value="Ribosomal_uL16_CS"/>
</dbReference>
<dbReference type="InterPro" id="IPR016180">
    <property type="entry name" value="Ribosomal_uL16_dom"/>
</dbReference>
<dbReference type="InterPro" id="IPR036920">
    <property type="entry name" value="Ribosomal_uL16_sf"/>
</dbReference>
<dbReference type="NCBIfam" id="TIGR01164">
    <property type="entry name" value="rplP_bact"/>
    <property type="match status" value="1"/>
</dbReference>
<dbReference type="PANTHER" id="PTHR12220">
    <property type="entry name" value="50S/60S RIBOSOMAL PROTEIN L16"/>
    <property type="match status" value="1"/>
</dbReference>
<dbReference type="PANTHER" id="PTHR12220:SF13">
    <property type="entry name" value="LARGE RIBOSOMAL SUBUNIT PROTEIN UL16M"/>
    <property type="match status" value="1"/>
</dbReference>
<dbReference type="Pfam" id="PF00252">
    <property type="entry name" value="Ribosomal_L16"/>
    <property type="match status" value="1"/>
</dbReference>
<dbReference type="PRINTS" id="PR00060">
    <property type="entry name" value="RIBOSOMALL16"/>
</dbReference>
<dbReference type="SUPFAM" id="SSF54686">
    <property type="entry name" value="Ribosomal protein L16p/L10e"/>
    <property type="match status" value="1"/>
</dbReference>
<dbReference type="PROSITE" id="PS00586">
    <property type="entry name" value="RIBOSOMAL_L16_1"/>
    <property type="match status" value="1"/>
</dbReference>
<dbReference type="PROSITE" id="PS00701">
    <property type="entry name" value="RIBOSOMAL_L16_2"/>
    <property type="match status" value="1"/>
</dbReference>
<name>RL16_RIPO1</name>
<sequence length="139" mass="16042">MLSPRRTKFRKQQRGRMRGMAYRGSTINFGDYALQATEPCWITSRQIEAARRAMTRYIKRGGKIWIRIFPDKPVTMRPAETRMGSGKGSPEYWVAVVKPGRIMFELDGVSEPIAREAMRLAAQKLPIKTKFITKAEEYI</sequence>